<feature type="chain" id="PRO_0000364455" description="Fructose-1,6-bisphosphatase class 1">
    <location>
        <begin position="1"/>
        <end position="334"/>
    </location>
</feature>
<feature type="binding site" evidence="1">
    <location>
        <position position="90"/>
    </location>
    <ligand>
        <name>Mg(2+)</name>
        <dbReference type="ChEBI" id="CHEBI:18420"/>
        <label>1</label>
    </ligand>
</feature>
<feature type="binding site" evidence="1">
    <location>
        <position position="113"/>
    </location>
    <ligand>
        <name>Mg(2+)</name>
        <dbReference type="ChEBI" id="CHEBI:18420"/>
        <label>1</label>
    </ligand>
</feature>
<feature type="binding site" evidence="1">
    <location>
        <position position="113"/>
    </location>
    <ligand>
        <name>Mg(2+)</name>
        <dbReference type="ChEBI" id="CHEBI:18420"/>
        <label>2</label>
    </ligand>
</feature>
<feature type="binding site" evidence="1">
    <location>
        <position position="115"/>
    </location>
    <ligand>
        <name>Mg(2+)</name>
        <dbReference type="ChEBI" id="CHEBI:18420"/>
        <label>1</label>
    </ligand>
</feature>
<feature type="binding site" evidence="1">
    <location>
        <begin position="116"/>
        <end position="119"/>
    </location>
    <ligand>
        <name>substrate</name>
    </ligand>
</feature>
<feature type="binding site" evidence="1">
    <location>
        <position position="116"/>
    </location>
    <ligand>
        <name>Mg(2+)</name>
        <dbReference type="ChEBI" id="CHEBI:18420"/>
        <label>2</label>
    </ligand>
</feature>
<feature type="binding site" evidence="1">
    <location>
        <position position="209"/>
    </location>
    <ligand>
        <name>substrate</name>
    </ligand>
</feature>
<feature type="binding site" evidence="1">
    <location>
        <position position="242"/>
    </location>
    <ligand>
        <name>substrate</name>
    </ligand>
</feature>
<feature type="binding site" evidence="1">
    <location>
        <position position="272"/>
    </location>
    <ligand>
        <name>substrate</name>
    </ligand>
</feature>
<feature type="binding site" evidence="1">
    <location>
        <position position="278"/>
    </location>
    <ligand>
        <name>Mg(2+)</name>
        <dbReference type="ChEBI" id="CHEBI:18420"/>
        <label>2</label>
    </ligand>
</feature>
<keyword id="KW-0119">Carbohydrate metabolism</keyword>
<keyword id="KW-0963">Cytoplasm</keyword>
<keyword id="KW-0378">Hydrolase</keyword>
<keyword id="KW-0460">Magnesium</keyword>
<keyword id="KW-0479">Metal-binding</keyword>
<keyword id="KW-1185">Reference proteome</keyword>
<name>F16PA_ACTSZ</name>
<comment type="catalytic activity">
    <reaction evidence="1">
        <text>beta-D-fructose 1,6-bisphosphate + H2O = beta-D-fructose 6-phosphate + phosphate</text>
        <dbReference type="Rhea" id="RHEA:11064"/>
        <dbReference type="ChEBI" id="CHEBI:15377"/>
        <dbReference type="ChEBI" id="CHEBI:32966"/>
        <dbReference type="ChEBI" id="CHEBI:43474"/>
        <dbReference type="ChEBI" id="CHEBI:57634"/>
        <dbReference type="EC" id="3.1.3.11"/>
    </reaction>
</comment>
<comment type="cofactor">
    <cofactor evidence="1">
        <name>Mg(2+)</name>
        <dbReference type="ChEBI" id="CHEBI:18420"/>
    </cofactor>
    <text evidence="1">Binds 2 magnesium ions per subunit.</text>
</comment>
<comment type="pathway">
    <text evidence="1">Carbohydrate biosynthesis; gluconeogenesis.</text>
</comment>
<comment type="subunit">
    <text evidence="1">Homotetramer.</text>
</comment>
<comment type="subcellular location">
    <subcellularLocation>
        <location evidence="1">Cytoplasm</location>
    </subcellularLocation>
</comment>
<comment type="similarity">
    <text evidence="1">Belongs to the FBPase class 1 family.</text>
</comment>
<sequence length="334" mass="37395">MKTLDEFIVEKQAEYPNAKGALTGILSSIRLVAKIIHRDINRAGLSNDILGYAGNQNVQGENQMKLDVFANDTFKRALMAREEVAGFASEEEDDFVAFDTERGRNARYIILTDPLDGSSNIDVNVAVGTIFSIYRRISPVGTPVTLEDFMQPGHKQVAAGYVVYGSSTMLVYTTGNGVNGFTYDPSLGVFCMSHENLQIPSTGRIYSINEGQYLKFPMGVKKYIKYCQEEDKATNRPYTSRYIGSLVSDFHRNMLKGGIYIYPNATNYPNGKLRLLYEGNPMAFLAEQAGGLANDGYNRILDIEPLELHQRVPFFVGSKEMVKKANEFMRDYPE</sequence>
<organism>
    <name type="scientific">Actinobacillus succinogenes (strain ATCC 55618 / DSM 22257 / CCUG 43843 / 130Z)</name>
    <dbReference type="NCBI Taxonomy" id="339671"/>
    <lineage>
        <taxon>Bacteria</taxon>
        <taxon>Pseudomonadati</taxon>
        <taxon>Pseudomonadota</taxon>
        <taxon>Gammaproteobacteria</taxon>
        <taxon>Pasteurellales</taxon>
        <taxon>Pasteurellaceae</taxon>
        <taxon>Actinobacillus</taxon>
    </lineage>
</organism>
<reference key="1">
    <citation type="journal article" date="2010" name="BMC Genomics">
        <title>A genomic perspective on the potential of Actinobacillus succinogenes for industrial succinate production.</title>
        <authorList>
            <person name="McKinlay J.B."/>
            <person name="Laivenieks M."/>
            <person name="Schindler B.D."/>
            <person name="McKinlay A.A."/>
            <person name="Siddaramappa S."/>
            <person name="Challacombe J.F."/>
            <person name="Lowry S.R."/>
            <person name="Clum A."/>
            <person name="Lapidus A.L."/>
            <person name="Burkhart K.B."/>
            <person name="Harkins V."/>
            <person name="Vieille C."/>
        </authorList>
    </citation>
    <scope>NUCLEOTIDE SEQUENCE [LARGE SCALE GENOMIC DNA]</scope>
    <source>
        <strain>ATCC 55618 / DSM 22257 / CCUG 43843 / 130Z</strain>
    </source>
</reference>
<gene>
    <name evidence="1" type="primary">fbp</name>
    <name type="ordered locus">Asuc_1073</name>
</gene>
<evidence type="ECO:0000255" key="1">
    <source>
        <dbReference type="HAMAP-Rule" id="MF_01855"/>
    </source>
</evidence>
<protein>
    <recommendedName>
        <fullName evidence="1">Fructose-1,6-bisphosphatase class 1</fullName>
        <shortName evidence="1">FBPase class 1</shortName>
        <ecNumber evidence="1">3.1.3.11</ecNumber>
    </recommendedName>
    <alternativeName>
        <fullName evidence="1">D-fructose-1,6-bisphosphate 1-phosphohydrolase class 1</fullName>
    </alternativeName>
</protein>
<proteinExistence type="inferred from homology"/>
<dbReference type="EC" id="3.1.3.11" evidence="1"/>
<dbReference type="EMBL" id="CP000746">
    <property type="protein sequence ID" value="ABR74439.1"/>
    <property type="molecule type" value="Genomic_DNA"/>
</dbReference>
<dbReference type="RefSeq" id="WP_012072816.1">
    <property type="nucleotide sequence ID" value="NC_009655.1"/>
</dbReference>
<dbReference type="SMR" id="A6VN92"/>
<dbReference type="STRING" id="339671.Asuc_1073"/>
<dbReference type="KEGG" id="asu:Asuc_1073"/>
<dbReference type="eggNOG" id="COG0158">
    <property type="taxonomic scope" value="Bacteria"/>
</dbReference>
<dbReference type="HOGENOM" id="CLU_039977_2_2_6"/>
<dbReference type="OrthoDB" id="9806756at2"/>
<dbReference type="UniPathway" id="UPA00138"/>
<dbReference type="Proteomes" id="UP000001114">
    <property type="component" value="Chromosome"/>
</dbReference>
<dbReference type="GO" id="GO:0005829">
    <property type="term" value="C:cytosol"/>
    <property type="evidence" value="ECO:0007669"/>
    <property type="project" value="TreeGrafter"/>
</dbReference>
<dbReference type="GO" id="GO:0042132">
    <property type="term" value="F:fructose 1,6-bisphosphate 1-phosphatase activity"/>
    <property type="evidence" value="ECO:0007669"/>
    <property type="project" value="UniProtKB-UniRule"/>
</dbReference>
<dbReference type="GO" id="GO:0000287">
    <property type="term" value="F:magnesium ion binding"/>
    <property type="evidence" value="ECO:0007669"/>
    <property type="project" value="UniProtKB-UniRule"/>
</dbReference>
<dbReference type="GO" id="GO:0030388">
    <property type="term" value="P:fructose 1,6-bisphosphate metabolic process"/>
    <property type="evidence" value="ECO:0007669"/>
    <property type="project" value="TreeGrafter"/>
</dbReference>
<dbReference type="GO" id="GO:0006002">
    <property type="term" value="P:fructose 6-phosphate metabolic process"/>
    <property type="evidence" value="ECO:0007669"/>
    <property type="project" value="TreeGrafter"/>
</dbReference>
<dbReference type="GO" id="GO:0006000">
    <property type="term" value="P:fructose metabolic process"/>
    <property type="evidence" value="ECO:0007669"/>
    <property type="project" value="TreeGrafter"/>
</dbReference>
<dbReference type="GO" id="GO:0006094">
    <property type="term" value="P:gluconeogenesis"/>
    <property type="evidence" value="ECO:0007669"/>
    <property type="project" value="UniProtKB-UniRule"/>
</dbReference>
<dbReference type="GO" id="GO:0005986">
    <property type="term" value="P:sucrose biosynthetic process"/>
    <property type="evidence" value="ECO:0007669"/>
    <property type="project" value="TreeGrafter"/>
</dbReference>
<dbReference type="CDD" id="cd00354">
    <property type="entry name" value="FBPase"/>
    <property type="match status" value="1"/>
</dbReference>
<dbReference type="FunFam" id="3.30.540.10:FF:000002">
    <property type="entry name" value="Fructose-1,6-bisphosphatase class 1"/>
    <property type="match status" value="1"/>
</dbReference>
<dbReference type="FunFam" id="3.40.190.80:FF:000001">
    <property type="entry name" value="Fructose-1,6-bisphosphatase class 1"/>
    <property type="match status" value="1"/>
</dbReference>
<dbReference type="Gene3D" id="3.40.190.80">
    <property type="match status" value="1"/>
</dbReference>
<dbReference type="Gene3D" id="3.30.540.10">
    <property type="entry name" value="Fructose-1,6-Bisphosphatase, subunit A, domain 1"/>
    <property type="match status" value="1"/>
</dbReference>
<dbReference type="HAMAP" id="MF_01855">
    <property type="entry name" value="FBPase_class1"/>
    <property type="match status" value="1"/>
</dbReference>
<dbReference type="InterPro" id="IPR044015">
    <property type="entry name" value="FBPase_C_dom"/>
</dbReference>
<dbReference type="InterPro" id="IPR000146">
    <property type="entry name" value="FBPase_class-1"/>
</dbReference>
<dbReference type="InterPro" id="IPR033391">
    <property type="entry name" value="FBPase_N"/>
</dbReference>
<dbReference type="InterPro" id="IPR028343">
    <property type="entry name" value="FBPtase"/>
</dbReference>
<dbReference type="InterPro" id="IPR020548">
    <property type="entry name" value="Fructose_bisphosphatase_AS"/>
</dbReference>
<dbReference type="NCBIfam" id="NF006778">
    <property type="entry name" value="PRK09293.1-1"/>
    <property type="match status" value="1"/>
</dbReference>
<dbReference type="PANTHER" id="PTHR11556">
    <property type="entry name" value="FRUCTOSE-1,6-BISPHOSPHATASE-RELATED"/>
    <property type="match status" value="1"/>
</dbReference>
<dbReference type="PANTHER" id="PTHR11556:SF35">
    <property type="entry name" value="SEDOHEPTULOSE-1,7-BISPHOSPHATASE, CHLOROPLASTIC"/>
    <property type="match status" value="1"/>
</dbReference>
<dbReference type="Pfam" id="PF00316">
    <property type="entry name" value="FBPase"/>
    <property type="match status" value="1"/>
</dbReference>
<dbReference type="Pfam" id="PF18913">
    <property type="entry name" value="FBPase_C"/>
    <property type="match status" value="1"/>
</dbReference>
<dbReference type="PIRSF" id="PIRSF500210">
    <property type="entry name" value="FBPtase"/>
    <property type="match status" value="1"/>
</dbReference>
<dbReference type="PIRSF" id="PIRSF000904">
    <property type="entry name" value="FBPtase_SBPase"/>
    <property type="match status" value="1"/>
</dbReference>
<dbReference type="PRINTS" id="PR00115">
    <property type="entry name" value="F16BPHPHTASE"/>
</dbReference>
<dbReference type="SUPFAM" id="SSF56655">
    <property type="entry name" value="Carbohydrate phosphatase"/>
    <property type="match status" value="1"/>
</dbReference>
<dbReference type="PROSITE" id="PS00124">
    <property type="entry name" value="FBPASE"/>
    <property type="match status" value="1"/>
</dbReference>
<accession>A6VN92</accession>